<organism>
    <name type="scientific">Chlorobium phaeobacteroides (strain DSM 266 / SMG 266 / 2430)</name>
    <dbReference type="NCBI Taxonomy" id="290317"/>
    <lineage>
        <taxon>Bacteria</taxon>
        <taxon>Pseudomonadati</taxon>
        <taxon>Chlorobiota</taxon>
        <taxon>Chlorobiia</taxon>
        <taxon>Chlorobiales</taxon>
        <taxon>Chlorobiaceae</taxon>
        <taxon>Chlorobium/Pelodictyon group</taxon>
        <taxon>Chlorobium</taxon>
    </lineage>
</organism>
<protein>
    <recommendedName>
        <fullName evidence="1">ATP synthase subunit a</fullName>
    </recommendedName>
    <alternativeName>
        <fullName evidence="1">ATP synthase F0 sector subunit a</fullName>
    </alternativeName>
    <alternativeName>
        <fullName evidence="1">F-ATPase subunit 6</fullName>
    </alternativeName>
</protein>
<comment type="function">
    <text evidence="1">Key component of the proton channel; it plays a direct role in the translocation of protons across the membrane.</text>
</comment>
<comment type="subunit">
    <text evidence="1">F-type ATPases have 2 components, CF(1) - the catalytic core - and CF(0) - the membrane proton channel. CF(1) has five subunits: alpha(3), beta(3), gamma(1), delta(1), epsilon(1). CF(0) has four main subunits: a, b, b' and c.</text>
</comment>
<comment type="subcellular location">
    <subcellularLocation>
        <location evidence="1">Cell inner membrane</location>
        <topology evidence="1">Multi-pass membrane protein</topology>
    </subcellularLocation>
</comment>
<comment type="similarity">
    <text evidence="1">Belongs to the ATPase A chain family.</text>
</comment>
<proteinExistence type="inferred from homology"/>
<name>ATP6_CHLPD</name>
<reference key="1">
    <citation type="submission" date="2006-12" db="EMBL/GenBank/DDBJ databases">
        <title>Complete sequence of Chlorobium phaeobacteroides DSM 266.</title>
        <authorList>
            <consortium name="US DOE Joint Genome Institute"/>
            <person name="Copeland A."/>
            <person name="Lucas S."/>
            <person name="Lapidus A."/>
            <person name="Barry K."/>
            <person name="Detter J.C."/>
            <person name="Glavina del Rio T."/>
            <person name="Hammon N."/>
            <person name="Israni S."/>
            <person name="Pitluck S."/>
            <person name="Goltsman E."/>
            <person name="Schmutz J."/>
            <person name="Larimer F."/>
            <person name="Land M."/>
            <person name="Hauser L."/>
            <person name="Mikhailova N."/>
            <person name="Li T."/>
            <person name="Overmann J."/>
            <person name="Bryant D.A."/>
            <person name="Richardson P."/>
        </authorList>
    </citation>
    <scope>NUCLEOTIDE SEQUENCE [LARGE SCALE GENOMIC DNA]</scope>
    <source>
        <strain>DSM 266 / SMG 266 / 2430</strain>
    </source>
</reference>
<dbReference type="EMBL" id="CP000492">
    <property type="protein sequence ID" value="ABL66693.1"/>
    <property type="molecule type" value="Genomic_DNA"/>
</dbReference>
<dbReference type="RefSeq" id="WP_015961220.1">
    <property type="nucleotide sequence ID" value="NC_008639.1"/>
</dbReference>
<dbReference type="SMR" id="A1BJW6"/>
<dbReference type="STRING" id="290317.Cpha266_2709"/>
<dbReference type="KEGG" id="cph:Cpha266_2709"/>
<dbReference type="eggNOG" id="COG0356">
    <property type="taxonomic scope" value="Bacteria"/>
</dbReference>
<dbReference type="HOGENOM" id="CLU_041018_0_0_10"/>
<dbReference type="OrthoDB" id="9809130at2"/>
<dbReference type="Proteomes" id="UP000008701">
    <property type="component" value="Chromosome"/>
</dbReference>
<dbReference type="GO" id="GO:0005886">
    <property type="term" value="C:plasma membrane"/>
    <property type="evidence" value="ECO:0007669"/>
    <property type="project" value="UniProtKB-SubCell"/>
</dbReference>
<dbReference type="GO" id="GO:0045259">
    <property type="term" value="C:proton-transporting ATP synthase complex"/>
    <property type="evidence" value="ECO:0007669"/>
    <property type="project" value="UniProtKB-KW"/>
</dbReference>
<dbReference type="GO" id="GO:0046933">
    <property type="term" value="F:proton-transporting ATP synthase activity, rotational mechanism"/>
    <property type="evidence" value="ECO:0007669"/>
    <property type="project" value="UniProtKB-UniRule"/>
</dbReference>
<dbReference type="CDD" id="cd00310">
    <property type="entry name" value="ATP-synt_Fo_a_6"/>
    <property type="match status" value="1"/>
</dbReference>
<dbReference type="Gene3D" id="1.20.120.220">
    <property type="entry name" value="ATP synthase, F0 complex, subunit A"/>
    <property type="match status" value="1"/>
</dbReference>
<dbReference type="HAMAP" id="MF_01393">
    <property type="entry name" value="ATP_synth_a_bact"/>
    <property type="match status" value="1"/>
</dbReference>
<dbReference type="InterPro" id="IPR000568">
    <property type="entry name" value="ATP_synth_F0_asu"/>
</dbReference>
<dbReference type="InterPro" id="IPR023011">
    <property type="entry name" value="ATP_synth_F0_asu_AS"/>
</dbReference>
<dbReference type="InterPro" id="IPR045083">
    <property type="entry name" value="ATP_synth_F0_asu_bact/mt"/>
</dbReference>
<dbReference type="InterPro" id="IPR035908">
    <property type="entry name" value="F0_ATP_A_sf"/>
</dbReference>
<dbReference type="NCBIfam" id="TIGR01131">
    <property type="entry name" value="ATP_synt_6_or_A"/>
    <property type="match status" value="1"/>
</dbReference>
<dbReference type="NCBIfam" id="NF009953">
    <property type="entry name" value="PRK13419.1"/>
    <property type="match status" value="1"/>
</dbReference>
<dbReference type="PANTHER" id="PTHR11410">
    <property type="entry name" value="ATP SYNTHASE SUBUNIT A"/>
    <property type="match status" value="1"/>
</dbReference>
<dbReference type="PANTHER" id="PTHR11410:SF0">
    <property type="entry name" value="ATP SYNTHASE SUBUNIT A"/>
    <property type="match status" value="1"/>
</dbReference>
<dbReference type="Pfam" id="PF00119">
    <property type="entry name" value="ATP-synt_A"/>
    <property type="match status" value="1"/>
</dbReference>
<dbReference type="PRINTS" id="PR00123">
    <property type="entry name" value="ATPASEA"/>
</dbReference>
<dbReference type="SUPFAM" id="SSF81336">
    <property type="entry name" value="F1F0 ATP synthase subunit A"/>
    <property type="match status" value="1"/>
</dbReference>
<dbReference type="PROSITE" id="PS00449">
    <property type="entry name" value="ATPASE_A"/>
    <property type="match status" value="1"/>
</dbReference>
<evidence type="ECO:0000255" key="1">
    <source>
        <dbReference type="HAMAP-Rule" id="MF_01393"/>
    </source>
</evidence>
<accession>A1BJW6</accession>
<sequence>MKQERTSKVKGLIKVIALVVPFLLNVNAFASPAESAGVTHDSIAAVARTEGAHAGEAPHGEAAGHGEEKAGDVIMHHILDSNVYSFEPFGEIVLPKIVVGGFDISITKHVVTLWVVSAIVLIVFTIIGSKYKTMSPKTAPKGFVNAMEALVEFIRLDVAKANIGPGYEKYLPYLLTVFMFVLLCNVLGLVPYGATATGNINVTLTLATFTFVLTQIAALKAHGIKGYLAHLTGGTHPALWIIMIPIEFIGLFTKPVALTIRLFANMTAGHIVILSLIFISFILKSYIVAVAMSVPFSIFIYLLEIFVAFLQAYIFTMLSALFIGLASAHEEHADHEAGAAHH</sequence>
<feature type="chain" id="PRO_5000183588" description="ATP synthase subunit a">
    <location>
        <begin position="1"/>
        <end position="342"/>
    </location>
</feature>
<feature type="transmembrane region" description="Helical" evidence="1">
    <location>
        <begin position="11"/>
        <end position="31"/>
    </location>
</feature>
<feature type="transmembrane region" description="Helical" evidence="1">
    <location>
        <begin position="109"/>
        <end position="129"/>
    </location>
</feature>
<feature type="transmembrane region" description="Helical" evidence="1">
    <location>
        <begin position="170"/>
        <end position="190"/>
    </location>
</feature>
<feature type="transmembrane region" description="Helical" evidence="1">
    <location>
        <begin position="199"/>
        <end position="219"/>
    </location>
</feature>
<feature type="transmembrane region" description="Helical" evidence="1">
    <location>
        <begin position="238"/>
        <end position="258"/>
    </location>
</feature>
<feature type="transmembrane region" description="Helical" evidence="1">
    <location>
        <begin position="262"/>
        <end position="282"/>
    </location>
</feature>
<feature type="transmembrane region" description="Helical" evidence="1">
    <location>
        <begin position="287"/>
        <end position="307"/>
    </location>
</feature>
<feature type="transmembrane region" description="Helical" evidence="1">
    <location>
        <begin position="308"/>
        <end position="328"/>
    </location>
</feature>
<keyword id="KW-0066">ATP synthesis</keyword>
<keyword id="KW-0997">Cell inner membrane</keyword>
<keyword id="KW-1003">Cell membrane</keyword>
<keyword id="KW-0138">CF(0)</keyword>
<keyword id="KW-0375">Hydrogen ion transport</keyword>
<keyword id="KW-0406">Ion transport</keyword>
<keyword id="KW-0472">Membrane</keyword>
<keyword id="KW-1185">Reference proteome</keyword>
<keyword id="KW-0812">Transmembrane</keyword>
<keyword id="KW-1133">Transmembrane helix</keyword>
<keyword id="KW-0813">Transport</keyword>
<gene>
    <name evidence="1" type="primary">atpB</name>
    <name type="ordered locus">Cpha266_2709</name>
</gene>